<organism>
    <name type="scientific">Streptococcus pneumoniae (strain CGSP14)</name>
    <dbReference type="NCBI Taxonomy" id="516950"/>
    <lineage>
        <taxon>Bacteria</taxon>
        <taxon>Bacillati</taxon>
        <taxon>Bacillota</taxon>
        <taxon>Bacilli</taxon>
        <taxon>Lactobacillales</taxon>
        <taxon>Streptococcaceae</taxon>
        <taxon>Streptococcus</taxon>
    </lineage>
</organism>
<accession>B2IQY9</accession>
<gene>
    <name evidence="1" type="primary">dnaA</name>
    <name type="ordered locus">SPCG_0001</name>
</gene>
<comment type="function">
    <text evidence="1">Plays an essential role in the initiation and regulation of chromosomal replication. ATP-DnaA binds to the origin of replication (oriC) to initiate formation of the DNA replication initiation complex once per cell cycle. Binds the DnaA box (a 9 base pair repeat at the origin) and separates the double-stranded (ds)DNA. Forms a right-handed helical filament on oriC DNA; dsDNA binds to the exterior of the filament while single-stranded (ss)DNA is stabiized in the filament's interior. The ATP-DnaA-oriC complex binds and stabilizes one strand of the AT-rich DNA unwinding element (DUE), permitting loading of DNA polymerase. After initiation quickly degrades to an ADP-DnaA complex that is not apt for DNA replication. Binds acidic phospholipids.</text>
</comment>
<comment type="subunit">
    <text evidence="1">Oligomerizes as a right-handed, spiral filament on DNA at oriC.</text>
</comment>
<comment type="subcellular location">
    <subcellularLocation>
        <location evidence="1">Cytoplasm</location>
    </subcellularLocation>
</comment>
<comment type="domain">
    <text evidence="1">Domain I is involved in oligomerization and binding regulators, domain II is flexibile and of varying length in different bacteria, domain III forms the AAA+ region, while domain IV binds dsDNA.</text>
</comment>
<comment type="similarity">
    <text evidence="1">Belongs to the DnaA family.</text>
</comment>
<reference key="1">
    <citation type="journal article" date="2009" name="BMC Genomics">
        <title>Genome evolution driven by host adaptations results in a more virulent and antimicrobial-resistant Streptococcus pneumoniae serotype 14.</title>
        <authorList>
            <person name="Ding F."/>
            <person name="Tang P."/>
            <person name="Hsu M.-H."/>
            <person name="Cui P."/>
            <person name="Hu S."/>
            <person name="Yu J."/>
            <person name="Chiu C.-H."/>
        </authorList>
    </citation>
    <scope>NUCLEOTIDE SEQUENCE [LARGE SCALE GENOMIC DNA]</scope>
    <source>
        <strain>CGSP14</strain>
    </source>
</reference>
<proteinExistence type="inferred from homology"/>
<protein>
    <recommendedName>
        <fullName evidence="1">Chromosomal replication initiator protein DnaA</fullName>
    </recommendedName>
</protein>
<name>DNAA_STRPS</name>
<sequence>MKEKQFWNRILEFAQERLTRSMYDFYAIQAELIKVEENVATIFLPRSEMEMVWEKQLKDIIVVAGFEIYDAEITPHYIFTKPQDTTSSQVEEATNLTLYDYSPKLVSIPYSDTGLKEKYTFDNFIQGDGNVWAVSAALAVSEDLALTYNPLFIYGGPGLGKTHLLNAIGNEILKNIPNARVKYIPAESFINDFLDHLRLGEMEKFKKTYRSLDLLLIDDIQSLSGKKVATQEEFFNTFNALHDKQKQIVLTSDRSPKHLEGLEERLVTRFSWGLTQTITPPDFETRIAILQSKTEHLGYNFQSDTLEYLAGQFDSNVRDLEGAINDITLIARVKKIKDITIDIAAEAIRARKQDVSQMLVIPIDKIQTEVGNFYGVSIKEMKGSRRLQNIVLARQVAMYLSRELTDNSLPKIGKEFGGKDHTTVIHAHAKIKSLIDQDDNLRLEIESIKKKIK</sequence>
<dbReference type="EMBL" id="CP001033">
    <property type="protein sequence ID" value="ACB89253.1"/>
    <property type="molecule type" value="Genomic_DNA"/>
</dbReference>
<dbReference type="RefSeq" id="WP_000660615.1">
    <property type="nucleotide sequence ID" value="NC_010582.1"/>
</dbReference>
<dbReference type="SMR" id="B2IQY9"/>
<dbReference type="GeneID" id="45652535"/>
<dbReference type="KEGG" id="spw:SPCG_0001"/>
<dbReference type="HOGENOM" id="CLU_026910_3_1_9"/>
<dbReference type="GO" id="GO:0005737">
    <property type="term" value="C:cytoplasm"/>
    <property type="evidence" value="ECO:0007669"/>
    <property type="project" value="UniProtKB-SubCell"/>
</dbReference>
<dbReference type="GO" id="GO:0005886">
    <property type="term" value="C:plasma membrane"/>
    <property type="evidence" value="ECO:0007669"/>
    <property type="project" value="TreeGrafter"/>
</dbReference>
<dbReference type="GO" id="GO:0005524">
    <property type="term" value="F:ATP binding"/>
    <property type="evidence" value="ECO:0007669"/>
    <property type="project" value="UniProtKB-UniRule"/>
</dbReference>
<dbReference type="GO" id="GO:0016887">
    <property type="term" value="F:ATP hydrolysis activity"/>
    <property type="evidence" value="ECO:0007669"/>
    <property type="project" value="InterPro"/>
</dbReference>
<dbReference type="GO" id="GO:0003688">
    <property type="term" value="F:DNA replication origin binding"/>
    <property type="evidence" value="ECO:0007669"/>
    <property type="project" value="UniProtKB-UniRule"/>
</dbReference>
<dbReference type="GO" id="GO:0008289">
    <property type="term" value="F:lipid binding"/>
    <property type="evidence" value="ECO:0007669"/>
    <property type="project" value="UniProtKB-KW"/>
</dbReference>
<dbReference type="GO" id="GO:0006270">
    <property type="term" value="P:DNA replication initiation"/>
    <property type="evidence" value="ECO:0007669"/>
    <property type="project" value="UniProtKB-UniRule"/>
</dbReference>
<dbReference type="GO" id="GO:0006275">
    <property type="term" value="P:regulation of DNA replication"/>
    <property type="evidence" value="ECO:0007669"/>
    <property type="project" value="UniProtKB-UniRule"/>
</dbReference>
<dbReference type="CDD" id="cd00009">
    <property type="entry name" value="AAA"/>
    <property type="match status" value="1"/>
</dbReference>
<dbReference type="CDD" id="cd06571">
    <property type="entry name" value="Bac_DnaA_C"/>
    <property type="match status" value="1"/>
</dbReference>
<dbReference type="FunFam" id="1.10.1750.10:FF:000002">
    <property type="entry name" value="Chromosomal replication initiator protein DnaA"/>
    <property type="match status" value="1"/>
</dbReference>
<dbReference type="FunFam" id="1.10.8.60:FF:000129">
    <property type="entry name" value="Chromosomal replication initiator protein DnaA"/>
    <property type="match status" value="1"/>
</dbReference>
<dbReference type="FunFam" id="3.40.50.300:FF:000668">
    <property type="entry name" value="Chromosomal replication initiator protein DnaA"/>
    <property type="match status" value="1"/>
</dbReference>
<dbReference type="Gene3D" id="1.10.1750.10">
    <property type="match status" value="1"/>
</dbReference>
<dbReference type="Gene3D" id="1.10.8.60">
    <property type="match status" value="1"/>
</dbReference>
<dbReference type="Gene3D" id="3.40.50.300">
    <property type="entry name" value="P-loop containing nucleotide triphosphate hydrolases"/>
    <property type="match status" value="1"/>
</dbReference>
<dbReference type="HAMAP" id="MF_00377">
    <property type="entry name" value="DnaA_bact"/>
    <property type="match status" value="1"/>
</dbReference>
<dbReference type="InterPro" id="IPR003593">
    <property type="entry name" value="AAA+_ATPase"/>
</dbReference>
<dbReference type="InterPro" id="IPR001957">
    <property type="entry name" value="Chromosome_initiator_DnaA"/>
</dbReference>
<dbReference type="InterPro" id="IPR020591">
    <property type="entry name" value="Chromosome_initiator_DnaA-like"/>
</dbReference>
<dbReference type="InterPro" id="IPR018312">
    <property type="entry name" value="Chromosome_initiator_DnaA_CS"/>
</dbReference>
<dbReference type="InterPro" id="IPR013159">
    <property type="entry name" value="DnaA_C"/>
</dbReference>
<dbReference type="InterPro" id="IPR013317">
    <property type="entry name" value="DnaA_dom"/>
</dbReference>
<dbReference type="InterPro" id="IPR027417">
    <property type="entry name" value="P-loop_NTPase"/>
</dbReference>
<dbReference type="InterPro" id="IPR010921">
    <property type="entry name" value="Trp_repressor/repl_initiator"/>
</dbReference>
<dbReference type="NCBIfam" id="TIGR00362">
    <property type="entry name" value="DnaA"/>
    <property type="match status" value="1"/>
</dbReference>
<dbReference type="PANTHER" id="PTHR30050">
    <property type="entry name" value="CHROMOSOMAL REPLICATION INITIATOR PROTEIN DNAA"/>
    <property type="match status" value="1"/>
</dbReference>
<dbReference type="PANTHER" id="PTHR30050:SF2">
    <property type="entry name" value="CHROMOSOMAL REPLICATION INITIATOR PROTEIN DNAA"/>
    <property type="match status" value="1"/>
</dbReference>
<dbReference type="Pfam" id="PF00308">
    <property type="entry name" value="Bac_DnaA"/>
    <property type="match status" value="1"/>
</dbReference>
<dbReference type="Pfam" id="PF08299">
    <property type="entry name" value="Bac_DnaA_C"/>
    <property type="match status" value="1"/>
</dbReference>
<dbReference type="PRINTS" id="PR00051">
    <property type="entry name" value="DNAA"/>
</dbReference>
<dbReference type="SMART" id="SM00382">
    <property type="entry name" value="AAA"/>
    <property type="match status" value="1"/>
</dbReference>
<dbReference type="SMART" id="SM00760">
    <property type="entry name" value="Bac_DnaA_C"/>
    <property type="match status" value="1"/>
</dbReference>
<dbReference type="SUPFAM" id="SSF52540">
    <property type="entry name" value="P-loop containing nucleoside triphosphate hydrolases"/>
    <property type="match status" value="1"/>
</dbReference>
<dbReference type="SUPFAM" id="SSF48295">
    <property type="entry name" value="TrpR-like"/>
    <property type="match status" value="1"/>
</dbReference>
<dbReference type="PROSITE" id="PS01008">
    <property type="entry name" value="DNAA"/>
    <property type="match status" value="1"/>
</dbReference>
<keyword id="KW-0067">ATP-binding</keyword>
<keyword id="KW-0963">Cytoplasm</keyword>
<keyword id="KW-0235">DNA replication</keyword>
<keyword id="KW-0238">DNA-binding</keyword>
<keyword id="KW-0446">Lipid-binding</keyword>
<keyword id="KW-0547">Nucleotide-binding</keyword>
<feature type="chain" id="PRO_1000122025" description="Chromosomal replication initiator protein DnaA">
    <location>
        <begin position="1"/>
        <end position="453"/>
    </location>
</feature>
<feature type="region of interest" description="Domain I, interacts with DnaA modulators" evidence="1">
    <location>
        <begin position="1"/>
        <end position="74"/>
    </location>
</feature>
<feature type="region of interest" description="Domain II" evidence="1">
    <location>
        <begin position="74"/>
        <end position="113"/>
    </location>
</feature>
<feature type="region of interest" description="Domain III, AAA+ region" evidence="1">
    <location>
        <begin position="114"/>
        <end position="331"/>
    </location>
</feature>
<feature type="region of interest" description="Domain IV, binds dsDNA" evidence="1">
    <location>
        <begin position="332"/>
        <end position="453"/>
    </location>
</feature>
<feature type="binding site" evidence="1">
    <location>
        <position position="158"/>
    </location>
    <ligand>
        <name>ATP</name>
        <dbReference type="ChEBI" id="CHEBI:30616"/>
    </ligand>
</feature>
<feature type="binding site" evidence="1">
    <location>
        <position position="160"/>
    </location>
    <ligand>
        <name>ATP</name>
        <dbReference type="ChEBI" id="CHEBI:30616"/>
    </ligand>
</feature>
<feature type="binding site" evidence="1">
    <location>
        <position position="161"/>
    </location>
    <ligand>
        <name>ATP</name>
        <dbReference type="ChEBI" id="CHEBI:30616"/>
    </ligand>
</feature>
<feature type="binding site" evidence="1">
    <location>
        <position position="162"/>
    </location>
    <ligand>
        <name>ATP</name>
        <dbReference type="ChEBI" id="CHEBI:30616"/>
    </ligand>
</feature>
<evidence type="ECO:0000255" key="1">
    <source>
        <dbReference type="HAMAP-Rule" id="MF_00377"/>
    </source>
</evidence>